<evidence type="ECO:0000250" key="1"/>
<evidence type="ECO:0000256" key="2">
    <source>
        <dbReference type="SAM" id="MobiDB-lite"/>
    </source>
</evidence>
<evidence type="ECO:0000305" key="3"/>
<reference key="1">
    <citation type="journal article" date="1998" name="DNA Res.">
        <title>Structural analysis of Arabidopsis thaliana chromosome 5. IV. Sequence features of the regions of 1,456,315 bp covered by nineteen physically assigned P1 and TAC clones.</title>
        <authorList>
            <person name="Sato S."/>
            <person name="Kaneko T."/>
            <person name="Kotani H."/>
            <person name="Nakamura Y."/>
            <person name="Asamizu E."/>
            <person name="Miyajima N."/>
            <person name="Tabata S."/>
        </authorList>
    </citation>
    <scope>NUCLEOTIDE SEQUENCE [LARGE SCALE GENOMIC DNA]</scope>
    <source>
        <strain>cv. Columbia</strain>
    </source>
</reference>
<reference key="2">
    <citation type="journal article" date="2017" name="Plant J.">
        <title>Araport11: a complete reannotation of the Arabidopsis thaliana reference genome.</title>
        <authorList>
            <person name="Cheng C.Y."/>
            <person name="Krishnakumar V."/>
            <person name="Chan A.P."/>
            <person name="Thibaud-Nissen F."/>
            <person name="Schobel S."/>
            <person name="Town C.D."/>
        </authorList>
    </citation>
    <scope>GENOME REANNOTATION</scope>
    <source>
        <strain>cv. Columbia</strain>
    </source>
</reference>
<reference key="3">
    <citation type="journal article" date="2003" name="Science">
        <title>Empirical analysis of transcriptional activity in the Arabidopsis genome.</title>
        <authorList>
            <person name="Yamada K."/>
            <person name="Lim J."/>
            <person name="Dale J.M."/>
            <person name="Chen H."/>
            <person name="Shinn P."/>
            <person name="Palm C.J."/>
            <person name="Southwick A.M."/>
            <person name="Wu H.C."/>
            <person name="Kim C.J."/>
            <person name="Nguyen M."/>
            <person name="Pham P.K."/>
            <person name="Cheuk R.F."/>
            <person name="Karlin-Newmann G."/>
            <person name="Liu S.X."/>
            <person name="Lam B."/>
            <person name="Sakano H."/>
            <person name="Wu T."/>
            <person name="Yu G."/>
            <person name="Miranda M."/>
            <person name="Quach H.L."/>
            <person name="Tripp M."/>
            <person name="Chang C.H."/>
            <person name="Lee J.M."/>
            <person name="Toriumi M.J."/>
            <person name="Chan M.M."/>
            <person name="Tang C.C."/>
            <person name="Onodera C.S."/>
            <person name="Deng J.M."/>
            <person name="Akiyama K."/>
            <person name="Ansari Y."/>
            <person name="Arakawa T."/>
            <person name="Banh J."/>
            <person name="Banno F."/>
            <person name="Bowser L."/>
            <person name="Brooks S.Y."/>
            <person name="Carninci P."/>
            <person name="Chao Q."/>
            <person name="Choy N."/>
            <person name="Enju A."/>
            <person name="Goldsmith A.D."/>
            <person name="Gurjal M."/>
            <person name="Hansen N.F."/>
            <person name="Hayashizaki Y."/>
            <person name="Johnson-Hopson C."/>
            <person name="Hsuan V.W."/>
            <person name="Iida K."/>
            <person name="Karnes M."/>
            <person name="Khan S."/>
            <person name="Koesema E."/>
            <person name="Ishida J."/>
            <person name="Jiang P.X."/>
            <person name="Jones T."/>
            <person name="Kawai J."/>
            <person name="Kamiya A."/>
            <person name="Meyers C."/>
            <person name="Nakajima M."/>
            <person name="Narusaka M."/>
            <person name="Seki M."/>
            <person name="Sakurai T."/>
            <person name="Satou M."/>
            <person name="Tamse R."/>
            <person name="Vaysberg M."/>
            <person name="Wallender E.K."/>
            <person name="Wong C."/>
            <person name="Yamamura Y."/>
            <person name="Yuan S."/>
            <person name="Shinozaki K."/>
            <person name="Davis R.W."/>
            <person name="Theologis A."/>
            <person name="Ecker J.R."/>
        </authorList>
    </citation>
    <scope>NUCLEOTIDE SEQUENCE [LARGE SCALE MRNA]</scope>
    <source>
        <strain>cv. Columbia</strain>
    </source>
</reference>
<reference key="4">
    <citation type="journal article" date="2004" name="Prog. Lipid Res.">
        <title>GDSL family of serine esterases/lipases.</title>
        <authorList>
            <person name="Akoh C.C."/>
            <person name="Lee G.-C."/>
            <person name="Liaw Y.-C."/>
            <person name="Huang T.-H."/>
            <person name="Shaw J.-F."/>
        </authorList>
    </citation>
    <scope>REVIEW</scope>
</reference>
<reference key="5">
    <citation type="journal article" date="2008" name="Pak. J. Biol. Sci.">
        <title>Sequence analysis of GDSL lipase gene family in Arabidopsis thaliana.</title>
        <authorList>
            <person name="Ling H."/>
        </authorList>
    </citation>
    <scope>GENE FAMILY</scope>
</reference>
<gene>
    <name type="ordered locus">At5g62930</name>
    <name type="ORF">MQB2.25</name>
</gene>
<organism>
    <name type="scientific">Arabidopsis thaliana</name>
    <name type="common">Mouse-ear cress</name>
    <dbReference type="NCBI Taxonomy" id="3702"/>
    <lineage>
        <taxon>Eukaryota</taxon>
        <taxon>Viridiplantae</taxon>
        <taxon>Streptophyta</taxon>
        <taxon>Embryophyta</taxon>
        <taxon>Tracheophyta</taxon>
        <taxon>Spermatophyta</taxon>
        <taxon>Magnoliopsida</taxon>
        <taxon>eudicotyledons</taxon>
        <taxon>Gunneridae</taxon>
        <taxon>Pentapetalae</taxon>
        <taxon>rosids</taxon>
        <taxon>malvids</taxon>
        <taxon>Brassicales</taxon>
        <taxon>Brassicaceae</taxon>
        <taxon>Camelineae</taxon>
        <taxon>Arabidopsis</taxon>
    </lineage>
</organism>
<sequence>MRPEIVLFGDSITAQSFRSGGWGSALADAYSRKADVVVRGYGGYNTRWALFLLHHIFPLGSSSPPVATTIFFGANDAALKGRTSDRQHVPVEEYTDNVRKIVQHLKKCSPTMLIVLITPPPIDEAGRQSYAESIYGEKAMKEPERTNETTGVYAQHCVALAEELGLRCVNLWSKMQETNDWQKKYLSDGLHLTPEGNGVVFDEVSRVFREAWLSPEEMPFDFPHHSHIDGKNPSKAFEERCL</sequence>
<protein>
    <recommendedName>
        <fullName>GDSL esterase/lipase At5g62930</fullName>
        <ecNumber>3.1.1.-</ecNumber>
    </recommendedName>
</protein>
<dbReference type="EC" id="3.1.1.-"/>
<dbReference type="EMBL" id="AB009053">
    <property type="protein sequence ID" value="BAB10862.1"/>
    <property type="molecule type" value="Genomic_DNA"/>
</dbReference>
<dbReference type="EMBL" id="CP002688">
    <property type="protein sequence ID" value="AED97675.1"/>
    <property type="molecule type" value="Genomic_DNA"/>
</dbReference>
<dbReference type="EMBL" id="AF462837">
    <property type="protein sequence ID" value="AAL58925.1"/>
    <property type="molecule type" value="mRNA"/>
</dbReference>
<dbReference type="EMBL" id="AY124825">
    <property type="protein sequence ID" value="AAM70534.1"/>
    <property type="molecule type" value="mRNA"/>
</dbReference>
<dbReference type="RefSeq" id="NP_201098.1">
    <property type="nucleotide sequence ID" value="NM_125687.3"/>
</dbReference>
<dbReference type="SMR" id="Q9FM04"/>
<dbReference type="BioGRID" id="21656">
    <property type="interactions" value="4"/>
</dbReference>
<dbReference type="FunCoup" id="Q9FM04">
    <property type="interactions" value="4299"/>
</dbReference>
<dbReference type="STRING" id="3702.Q9FM04"/>
<dbReference type="PaxDb" id="3702-AT5G62930.1"/>
<dbReference type="ProteomicsDB" id="221995"/>
<dbReference type="EnsemblPlants" id="AT5G62930.1">
    <property type="protein sequence ID" value="AT5G62930.1"/>
    <property type="gene ID" value="AT5G62930"/>
</dbReference>
<dbReference type="GeneID" id="836413"/>
<dbReference type="Gramene" id="AT5G62930.1">
    <property type="protein sequence ID" value="AT5G62930.1"/>
    <property type="gene ID" value="AT5G62930"/>
</dbReference>
<dbReference type="KEGG" id="ath:AT5G62930"/>
<dbReference type="Araport" id="AT5G62930"/>
<dbReference type="TAIR" id="AT5G62930"/>
<dbReference type="eggNOG" id="KOG3035">
    <property type="taxonomic scope" value="Eukaryota"/>
</dbReference>
<dbReference type="HOGENOM" id="CLU_051989_0_2_1"/>
<dbReference type="InParanoid" id="Q9FM04"/>
<dbReference type="OMA" id="YGQDARK"/>
<dbReference type="PRO" id="PR:Q9FM04"/>
<dbReference type="Proteomes" id="UP000006548">
    <property type="component" value="Chromosome 5"/>
</dbReference>
<dbReference type="ExpressionAtlas" id="Q9FM04">
    <property type="expression patterns" value="baseline and differential"/>
</dbReference>
<dbReference type="GO" id="GO:0005783">
    <property type="term" value="C:endoplasmic reticulum"/>
    <property type="evidence" value="ECO:0000314"/>
    <property type="project" value="TAIR"/>
</dbReference>
<dbReference type="GO" id="GO:0005634">
    <property type="term" value="C:nucleus"/>
    <property type="evidence" value="ECO:0000314"/>
    <property type="project" value="TAIR"/>
</dbReference>
<dbReference type="GO" id="GO:0016788">
    <property type="term" value="F:hydrolase activity, acting on ester bonds"/>
    <property type="evidence" value="ECO:0007669"/>
    <property type="project" value="InterPro"/>
</dbReference>
<dbReference type="GO" id="GO:0016042">
    <property type="term" value="P:lipid catabolic process"/>
    <property type="evidence" value="ECO:0007669"/>
    <property type="project" value="UniProtKB-KW"/>
</dbReference>
<dbReference type="CDD" id="cd01838">
    <property type="entry name" value="Isoamyl_acetate_hydrolase_like"/>
    <property type="match status" value="1"/>
</dbReference>
<dbReference type="FunFam" id="3.40.50.1110:FF:000002">
    <property type="entry name" value="isoamyl acetate-hydrolyzing esterase 1 homolog"/>
    <property type="match status" value="1"/>
</dbReference>
<dbReference type="Gene3D" id="3.40.50.1110">
    <property type="entry name" value="SGNH hydrolase"/>
    <property type="match status" value="1"/>
</dbReference>
<dbReference type="InterPro" id="IPR001087">
    <property type="entry name" value="GDSL"/>
</dbReference>
<dbReference type="InterPro" id="IPR045136">
    <property type="entry name" value="Iah1-like"/>
</dbReference>
<dbReference type="InterPro" id="IPR036514">
    <property type="entry name" value="SGNH_hydro_sf"/>
</dbReference>
<dbReference type="PANTHER" id="PTHR14209:SF36">
    <property type="entry name" value="GDSL-LIKE LIPASE_ACYLHYDROLASE FAMILY PROTEIN, EXPRESSED"/>
    <property type="match status" value="1"/>
</dbReference>
<dbReference type="PANTHER" id="PTHR14209">
    <property type="entry name" value="ISOAMYL ACETATE-HYDROLYZING ESTERASE 1"/>
    <property type="match status" value="1"/>
</dbReference>
<dbReference type="Pfam" id="PF00657">
    <property type="entry name" value="Lipase_GDSL"/>
    <property type="match status" value="1"/>
</dbReference>
<dbReference type="SUPFAM" id="SSF52266">
    <property type="entry name" value="SGNH hydrolase"/>
    <property type="match status" value="1"/>
</dbReference>
<name>GDL88_ARATH</name>
<proteinExistence type="evidence at transcript level"/>
<accession>Q9FM04</accession>
<feature type="chain" id="PRO_0000367428" description="GDSL esterase/lipase At5g62930">
    <location>
        <begin position="1"/>
        <end position="242"/>
    </location>
</feature>
<feature type="region of interest" description="Disordered" evidence="2">
    <location>
        <begin position="223"/>
        <end position="242"/>
    </location>
</feature>
<feature type="active site" description="Nucleophile" evidence="1">
    <location>
        <position position="11"/>
    </location>
</feature>
<comment type="similarity">
    <text evidence="3">Belongs to the 'GDSL' lipolytic enzyme family.</text>
</comment>
<keyword id="KW-0378">Hydrolase</keyword>
<keyword id="KW-0442">Lipid degradation</keyword>
<keyword id="KW-0443">Lipid metabolism</keyword>
<keyword id="KW-1185">Reference proteome</keyword>